<accession>Q94529</accession>
<accession>O02536</accession>
<accession>Q494L7</accession>
<accession>Q9VR01</accession>
<gene>
    <name type="primary">Gs1l</name>
    <name type="ORF">CG15441</name>
</gene>
<dbReference type="EC" id="3.1.3.96"/>
<dbReference type="EMBL" id="U66355">
    <property type="protein sequence ID" value="AAC47473.1"/>
    <property type="molecule type" value="Genomic_DNA"/>
</dbReference>
<dbReference type="EMBL" id="U66355">
    <property type="protein sequence ID" value="AAC47474.1"/>
    <property type="status" value="ALT_INIT"/>
    <property type="molecule type" value="Genomic_DNA"/>
</dbReference>
<dbReference type="EMBL" id="U66356">
    <property type="protein sequence ID" value="AAC47470.1"/>
    <property type="molecule type" value="mRNA"/>
</dbReference>
<dbReference type="EMBL" id="U66356">
    <property type="protein sequence ID" value="AAC47471.1"/>
    <property type="status" value="ALT_INIT"/>
    <property type="molecule type" value="mRNA"/>
</dbReference>
<dbReference type="EMBL" id="AE014134">
    <property type="protein sequence ID" value="AAF51007.1"/>
    <property type="molecule type" value="Genomic_DNA"/>
</dbReference>
<dbReference type="EMBL" id="BT023759">
    <property type="protein sequence ID" value="AAZ41767.1"/>
    <property type="molecule type" value="mRNA"/>
</dbReference>
<dbReference type="PIR" id="JC6201">
    <property type="entry name" value="JC6201"/>
</dbReference>
<dbReference type="RefSeq" id="NP_477228.1">
    <property type="nucleotide sequence ID" value="NM_057880.5"/>
</dbReference>
<dbReference type="SMR" id="Q94529"/>
<dbReference type="FunCoup" id="Q94529">
    <property type="interactions" value="419"/>
</dbReference>
<dbReference type="STRING" id="7227.FBpp0110109"/>
<dbReference type="PaxDb" id="7227-FBpp0077143"/>
<dbReference type="DNASU" id="33653"/>
<dbReference type="EnsemblMetazoa" id="FBtr0077453">
    <property type="protein sequence ID" value="FBpp0077143"/>
    <property type="gene ID" value="FBgn0019982"/>
</dbReference>
<dbReference type="GeneID" id="33653"/>
<dbReference type="KEGG" id="dme:Dmel_CG15441"/>
<dbReference type="AGR" id="FB:FBgn0019982"/>
<dbReference type="CTD" id="33653"/>
<dbReference type="FlyBase" id="FBgn0019982">
    <property type="gene designation" value="Gs1l"/>
</dbReference>
<dbReference type="VEuPathDB" id="VectorBase:FBgn0019982"/>
<dbReference type="eggNOG" id="KOG2914">
    <property type="taxonomic scope" value="Eukaryota"/>
</dbReference>
<dbReference type="GeneTree" id="ENSGT00390000014753"/>
<dbReference type="HOGENOM" id="CLU_045011_13_0_1"/>
<dbReference type="InParanoid" id="Q94529"/>
<dbReference type="OMA" id="IWCPHPG"/>
<dbReference type="OrthoDB" id="40579at2759"/>
<dbReference type="PhylomeDB" id="Q94529"/>
<dbReference type="Reactome" id="R-DME-73614">
    <property type="pathway name" value="Pyrimidine salvage"/>
</dbReference>
<dbReference type="BioGRID-ORCS" id="33653">
    <property type="hits" value="0 hits in 1 CRISPR screen"/>
</dbReference>
<dbReference type="GenomeRNAi" id="33653"/>
<dbReference type="PRO" id="PR:Q94529"/>
<dbReference type="Proteomes" id="UP000000803">
    <property type="component" value="Chromosome 2L"/>
</dbReference>
<dbReference type="Bgee" id="FBgn0019982">
    <property type="expression patterns" value="Expressed in DN1 neuron (Drosophila) in brain and 227 other cell types or tissues"/>
</dbReference>
<dbReference type="ExpressionAtlas" id="Q94529">
    <property type="expression patterns" value="baseline and differential"/>
</dbReference>
<dbReference type="GO" id="GO:0046872">
    <property type="term" value="F:metal ion binding"/>
    <property type="evidence" value="ECO:0007669"/>
    <property type="project" value="UniProtKB-KW"/>
</dbReference>
<dbReference type="GO" id="GO:0016791">
    <property type="term" value="F:phosphatase activity"/>
    <property type="evidence" value="ECO:0000318"/>
    <property type="project" value="GO_Central"/>
</dbReference>
<dbReference type="GO" id="GO:1990738">
    <property type="term" value="F:pseudouridine 5'-phosphatase activity"/>
    <property type="evidence" value="ECO:0000250"/>
    <property type="project" value="FlyBase"/>
</dbReference>
<dbReference type="GO" id="GO:0009117">
    <property type="term" value="P:nucleotide metabolic process"/>
    <property type="evidence" value="ECO:0007669"/>
    <property type="project" value="UniProtKB-KW"/>
</dbReference>
<dbReference type="GO" id="GO:0042060">
    <property type="term" value="P:wound healing"/>
    <property type="evidence" value="ECO:0007001"/>
    <property type="project" value="FlyBase"/>
</dbReference>
<dbReference type="CDD" id="cd07529">
    <property type="entry name" value="HAD_AtGPP-like"/>
    <property type="match status" value="1"/>
</dbReference>
<dbReference type="FunFam" id="1.10.150.240:FF:000001">
    <property type="entry name" value="Haloacid dehalogenase-like hydrolase domain"/>
    <property type="match status" value="1"/>
</dbReference>
<dbReference type="FunFam" id="3.40.50.1000:FF:000055">
    <property type="entry name" value="Haloacid dehalogenase-like hydrolase family protein"/>
    <property type="match status" value="1"/>
</dbReference>
<dbReference type="Gene3D" id="3.40.50.1000">
    <property type="entry name" value="HAD superfamily/HAD-like"/>
    <property type="match status" value="1"/>
</dbReference>
<dbReference type="Gene3D" id="1.10.150.240">
    <property type="entry name" value="Putative phosphatase, domain 2"/>
    <property type="match status" value="1"/>
</dbReference>
<dbReference type="InterPro" id="IPR045228">
    <property type="entry name" value="Gpp1/Gpp2-like"/>
</dbReference>
<dbReference type="InterPro" id="IPR036412">
    <property type="entry name" value="HAD-like_sf"/>
</dbReference>
<dbReference type="InterPro" id="IPR006439">
    <property type="entry name" value="HAD-SF_hydro_IA"/>
</dbReference>
<dbReference type="InterPro" id="IPR023214">
    <property type="entry name" value="HAD_sf"/>
</dbReference>
<dbReference type="InterPro" id="IPR023198">
    <property type="entry name" value="PGP-like_dom2"/>
</dbReference>
<dbReference type="NCBIfam" id="TIGR01509">
    <property type="entry name" value="HAD-SF-IA-v3"/>
    <property type="match status" value="1"/>
</dbReference>
<dbReference type="PANTHER" id="PTHR18901">
    <property type="entry name" value="2-DEOXYGLUCOSE-6-PHOSPHATE PHOSPHATASE 2"/>
    <property type="match status" value="1"/>
</dbReference>
<dbReference type="PANTHER" id="PTHR18901:SF38">
    <property type="entry name" value="PSEUDOURIDINE-5'-PHOSPHATASE"/>
    <property type="match status" value="1"/>
</dbReference>
<dbReference type="Pfam" id="PF00702">
    <property type="entry name" value="Hydrolase"/>
    <property type="match status" value="1"/>
</dbReference>
<dbReference type="SFLD" id="SFLDG01135">
    <property type="entry name" value="C1.5.6:_HAD__Beta-PGM__Phospha"/>
    <property type="match status" value="1"/>
</dbReference>
<dbReference type="SFLD" id="SFLDS00003">
    <property type="entry name" value="Haloacid_Dehalogenase"/>
    <property type="match status" value="1"/>
</dbReference>
<dbReference type="SUPFAM" id="SSF56784">
    <property type="entry name" value="HAD-like"/>
    <property type="match status" value="1"/>
</dbReference>
<sequence>MANKVLRKVTHCVFDMDGLLLDTERLYTVATEMILEPYGKTYPFEIKEQVMGLQTEPLARFMVEHYELPMSWEEYARQQRANTEILMRNAQLMPGAERLLRHLHANKVPFCLATSSGADMVELKTAQHRELFSLFNHKVCGSSDKEVVNGKPAPDIFLVAAGRFGVPPKPSDCLVFEDSPNGVTAANSAGMQVVMVPDPRLSQEKTSHATQVLASLADFKPEQFGLPAFTD</sequence>
<evidence type="ECO:0000250" key="1"/>
<evidence type="ECO:0000250" key="2">
    <source>
        <dbReference type="UniProtKB" id="Q08623"/>
    </source>
</evidence>
<evidence type="ECO:0000305" key="3"/>
<feature type="chain" id="PRO_0000108069" description="Probable pseudouridine-5'-phosphatase">
    <location>
        <begin position="1"/>
        <end position="231"/>
    </location>
</feature>
<feature type="active site" description="Nucleophile" evidence="1">
    <location>
        <position position="15"/>
    </location>
</feature>
<feature type="active site" description="Proton donor" evidence="1">
    <location>
        <position position="17"/>
    </location>
</feature>
<feature type="binding site" evidence="1">
    <location>
        <position position="15"/>
    </location>
    <ligand>
        <name>Mg(2+)</name>
        <dbReference type="ChEBI" id="CHEBI:18420"/>
    </ligand>
</feature>
<feature type="binding site" evidence="1">
    <location>
        <position position="17"/>
    </location>
    <ligand>
        <name>Mg(2+)</name>
        <dbReference type="ChEBI" id="CHEBI:18420"/>
    </ligand>
</feature>
<feature type="sequence variant" description="In strain: Canton-S.">
    <original>FE</original>
    <variation>VQ</variation>
    <location>
        <begin position="176"/>
        <end position="177"/>
    </location>
</feature>
<reference key="1">
    <citation type="journal article" date="1997" name="Gene">
        <title>Cloning and sequencing of ribosomal protein L27a and a gene similar to human GS1 in Drosophila.</title>
        <authorList>
            <person name="Soehnge H."/>
            <person name="Huang X."/>
            <person name="Becker M."/>
            <person name="Conover D."/>
            <person name="Stern M."/>
        </authorList>
    </citation>
    <scope>NUCLEOTIDE SEQUENCE [GENOMIC DNA / MRNA]</scope>
    <source>
        <strain>Canton-S</strain>
        <tissue>Embryo</tissue>
    </source>
</reference>
<reference key="2">
    <citation type="journal article" date="2000" name="Science">
        <title>The genome sequence of Drosophila melanogaster.</title>
        <authorList>
            <person name="Adams M.D."/>
            <person name="Celniker S.E."/>
            <person name="Holt R.A."/>
            <person name="Evans C.A."/>
            <person name="Gocayne J.D."/>
            <person name="Amanatides P.G."/>
            <person name="Scherer S.E."/>
            <person name="Li P.W."/>
            <person name="Hoskins R.A."/>
            <person name="Galle R.F."/>
            <person name="George R.A."/>
            <person name="Lewis S.E."/>
            <person name="Richards S."/>
            <person name="Ashburner M."/>
            <person name="Henderson S.N."/>
            <person name="Sutton G.G."/>
            <person name="Wortman J.R."/>
            <person name="Yandell M.D."/>
            <person name="Zhang Q."/>
            <person name="Chen L.X."/>
            <person name="Brandon R.C."/>
            <person name="Rogers Y.-H.C."/>
            <person name="Blazej R.G."/>
            <person name="Champe M."/>
            <person name="Pfeiffer B.D."/>
            <person name="Wan K.H."/>
            <person name="Doyle C."/>
            <person name="Baxter E.G."/>
            <person name="Helt G."/>
            <person name="Nelson C.R."/>
            <person name="Miklos G.L.G."/>
            <person name="Abril J.F."/>
            <person name="Agbayani A."/>
            <person name="An H.-J."/>
            <person name="Andrews-Pfannkoch C."/>
            <person name="Baldwin D."/>
            <person name="Ballew R.M."/>
            <person name="Basu A."/>
            <person name="Baxendale J."/>
            <person name="Bayraktaroglu L."/>
            <person name="Beasley E.M."/>
            <person name="Beeson K.Y."/>
            <person name="Benos P.V."/>
            <person name="Berman B.P."/>
            <person name="Bhandari D."/>
            <person name="Bolshakov S."/>
            <person name="Borkova D."/>
            <person name="Botchan M.R."/>
            <person name="Bouck J."/>
            <person name="Brokstein P."/>
            <person name="Brottier P."/>
            <person name="Burtis K.C."/>
            <person name="Busam D.A."/>
            <person name="Butler H."/>
            <person name="Cadieu E."/>
            <person name="Center A."/>
            <person name="Chandra I."/>
            <person name="Cherry J.M."/>
            <person name="Cawley S."/>
            <person name="Dahlke C."/>
            <person name="Davenport L.B."/>
            <person name="Davies P."/>
            <person name="de Pablos B."/>
            <person name="Delcher A."/>
            <person name="Deng Z."/>
            <person name="Mays A.D."/>
            <person name="Dew I."/>
            <person name="Dietz S.M."/>
            <person name="Dodson K."/>
            <person name="Doup L.E."/>
            <person name="Downes M."/>
            <person name="Dugan-Rocha S."/>
            <person name="Dunkov B.C."/>
            <person name="Dunn P."/>
            <person name="Durbin K.J."/>
            <person name="Evangelista C.C."/>
            <person name="Ferraz C."/>
            <person name="Ferriera S."/>
            <person name="Fleischmann W."/>
            <person name="Fosler C."/>
            <person name="Gabrielian A.E."/>
            <person name="Garg N.S."/>
            <person name="Gelbart W.M."/>
            <person name="Glasser K."/>
            <person name="Glodek A."/>
            <person name="Gong F."/>
            <person name="Gorrell J.H."/>
            <person name="Gu Z."/>
            <person name="Guan P."/>
            <person name="Harris M."/>
            <person name="Harris N.L."/>
            <person name="Harvey D.A."/>
            <person name="Heiman T.J."/>
            <person name="Hernandez J.R."/>
            <person name="Houck J."/>
            <person name="Hostin D."/>
            <person name="Houston K.A."/>
            <person name="Howland T.J."/>
            <person name="Wei M.-H."/>
            <person name="Ibegwam C."/>
            <person name="Jalali M."/>
            <person name="Kalush F."/>
            <person name="Karpen G.H."/>
            <person name="Ke Z."/>
            <person name="Kennison J.A."/>
            <person name="Ketchum K.A."/>
            <person name="Kimmel B.E."/>
            <person name="Kodira C.D."/>
            <person name="Kraft C.L."/>
            <person name="Kravitz S."/>
            <person name="Kulp D."/>
            <person name="Lai Z."/>
            <person name="Lasko P."/>
            <person name="Lei Y."/>
            <person name="Levitsky A.A."/>
            <person name="Li J.H."/>
            <person name="Li Z."/>
            <person name="Liang Y."/>
            <person name="Lin X."/>
            <person name="Liu X."/>
            <person name="Mattei B."/>
            <person name="McIntosh T.C."/>
            <person name="McLeod M.P."/>
            <person name="McPherson D."/>
            <person name="Merkulov G."/>
            <person name="Milshina N.V."/>
            <person name="Mobarry C."/>
            <person name="Morris J."/>
            <person name="Moshrefi A."/>
            <person name="Mount S.M."/>
            <person name="Moy M."/>
            <person name="Murphy B."/>
            <person name="Murphy L."/>
            <person name="Muzny D.M."/>
            <person name="Nelson D.L."/>
            <person name="Nelson D.R."/>
            <person name="Nelson K.A."/>
            <person name="Nixon K."/>
            <person name="Nusskern D.R."/>
            <person name="Pacleb J.M."/>
            <person name="Palazzolo M."/>
            <person name="Pittman G.S."/>
            <person name="Pan S."/>
            <person name="Pollard J."/>
            <person name="Puri V."/>
            <person name="Reese M.G."/>
            <person name="Reinert K."/>
            <person name="Remington K."/>
            <person name="Saunders R.D.C."/>
            <person name="Scheeler F."/>
            <person name="Shen H."/>
            <person name="Shue B.C."/>
            <person name="Siden-Kiamos I."/>
            <person name="Simpson M."/>
            <person name="Skupski M.P."/>
            <person name="Smith T.J."/>
            <person name="Spier E."/>
            <person name="Spradling A.C."/>
            <person name="Stapleton M."/>
            <person name="Strong R."/>
            <person name="Sun E."/>
            <person name="Svirskas R."/>
            <person name="Tector C."/>
            <person name="Turner R."/>
            <person name="Venter E."/>
            <person name="Wang A.H."/>
            <person name="Wang X."/>
            <person name="Wang Z.-Y."/>
            <person name="Wassarman D.A."/>
            <person name="Weinstock G.M."/>
            <person name="Weissenbach J."/>
            <person name="Williams S.M."/>
            <person name="Woodage T."/>
            <person name="Worley K.C."/>
            <person name="Wu D."/>
            <person name="Yang S."/>
            <person name="Yao Q.A."/>
            <person name="Ye J."/>
            <person name="Yeh R.-F."/>
            <person name="Zaveri J.S."/>
            <person name="Zhan M."/>
            <person name="Zhang G."/>
            <person name="Zhao Q."/>
            <person name="Zheng L."/>
            <person name="Zheng X.H."/>
            <person name="Zhong F.N."/>
            <person name="Zhong W."/>
            <person name="Zhou X."/>
            <person name="Zhu S.C."/>
            <person name="Zhu X."/>
            <person name="Smith H.O."/>
            <person name="Gibbs R.A."/>
            <person name="Myers E.W."/>
            <person name="Rubin G.M."/>
            <person name="Venter J.C."/>
        </authorList>
    </citation>
    <scope>NUCLEOTIDE SEQUENCE [LARGE SCALE GENOMIC DNA]</scope>
    <source>
        <strain>Berkeley</strain>
    </source>
</reference>
<reference key="3">
    <citation type="journal article" date="2002" name="Genome Biol.">
        <title>Annotation of the Drosophila melanogaster euchromatic genome: a systematic review.</title>
        <authorList>
            <person name="Misra S."/>
            <person name="Crosby M.A."/>
            <person name="Mungall C.J."/>
            <person name="Matthews B.B."/>
            <person name="Campbell K.S."/>
            <person name="Hradecky P."/>
            <person name="Huang Y."/>
            <person name="Kaminker J.S."/>
            <person name="Millburn G.H."/>
            <person name="Prochnik S.E."/>
            <person name="Smith C.D."/>
            <person name="Tupy J.L."/>
            <person name="Whitfield E.J."/>
            <person name="Bayraktaroglu L."/>
            <person name="Berman B.P."/>
            <person name="Bettencourt B.R."/>
            <person name="Celniker S.E."/>
            <person name="de Grey A.D.N.J."/>
            <person name="Drysdale R.A."/>
            <person name="Harris N.L."/>
            <person name="Richter J."/>
            <person name="Russo S."/>
            <person name="Schroeder A.J."/>
            <person name="Shu S.Q."/>
            <person name="Stapleton M."/>
            <person name="Yamada C."/>
            <person name="Ashburner M."/>
            <person name="Gelbart W.M."/>
            <person name="Rubin G.M."/>
            <person name="Lewis S.E."/>
        </authorList>
    </citation>
    <scope>GENOME REANNOTATION</scope>
    <source>
        <strain>Berkeley</strain>
    </source>
</reference>
<reference key="4">
    <citation type="submission" date="2005-08" db="EMBL/GenBank/DDBJ databases">
        <authorList>
            <person name="Stapleton M."/>
            <person name="Carlson J.W."/>
            <person name="Chavez C."/>
            <person name="Frise E."/>
            <person name="George R.A."/>
            <person name="Pacleb J.M."/>
            <person name="Park S."/>
            <person name="Wan K.H."/>
            <person name="Yu C."/>
            <person name="Celniker S.E."/>
        </authorList>
    </citation>
    <scope>NUCLEOTIDE SEQUENCE [LARGE SCALE MRNA]</scope>
    <source>
        <strain>Berkeley</strain>
        <tissue>Embryo</tissue>
    </source>
</reference>
<organism>
    <name type="scientific">Drosophila melanogaster</name>
    <name type="common">Fruit fly</name>
    <dbReference type="NCBI Taxonomy" id="7227"/>
    <lineage>
        <taxon>Eukaryota</taxon>
        <taxon>Metazoa</taxon>
        <taxon>Ecdysozoa</taxon>
        <taxon>Arthropoda</taxon>
        <taxon>Hexapoda</taxon>
        <taxon>Insecta</taxon>
        <taxon>Pterygota</taxon>
        <taxon>Neoptera</taxon>
        <taxon>Endopterygota</taxon>
        <taxon>Diptera</taxon>
        <taxon>Brachycera</taxon>
        <taxon>Muscomorpha</taxon>
        <taxon>Ephydroidea</taxon>
        <taxon>Drosophilidae</taxon>
        <taxon>Drosophila</taxon>
        <taxon>Sophophora</taxon>
    </lineage>
</organism>
<name>GS1_DROME</name>
<protein>
    <recommendedName>
        <fullName>Probable pseudouridine-5'-phosphatase</fullName>
        <ecNumber>3.1.3.96</ecNumber>
    </recommendedName>
    <alternativeName>
        <fullName>GS1-like protein</fullName>
    </alternativeName>
    <alternativeName>
        <fullName>Pseudouridine-5'-monophosphatase</fullName>
        <shortName>5'-PsiMPase</shortName>
    </alternativeName>
</protein>
<proteinExistence type="evidence at transcript level"/>
<comment type="function">
    <text evidence="2">Dephosphorylates pseudouridine 5'-phosphate, a potential intermediate in rRNA degradation.</text>
</comment>
<comment type="catalytic activity">
    <reaction>
        <text>psi-UMP + H2O = pseudouridine + phosphate</text>
        <dbReference type="Rhea" id="RHEA:10944"/>
        <dbReference type="ChEBI" id="CHEBI:15377"/>
        <dbReference type="ChEBI" id="CHEBI:17802"/>
        <dbReference type="ChEBI" id="CHEBI:43474"/>
        <dbReference type="ChEBI" id="CHEBI:58380"/>
        <dbReference type="EC" id="3.1.3.96"/>
    </reaction>
</comment>
<comment type="cofactor">
    <cofactor evidence="1">
        <name>Mg(2+)</name>
        <dbReference type="ChEBI" id="CHEBI:18420"/>
    </cofactor>
</comment>
<comment type="similarity">
    <text evidence="3">Belongs to the HAD-like hydrolase superfamily. CbbY/CbbZ/Gph/YieH family.</text>
</comment>
<comment type="sequence caution" evidence="3">
    <conflict type="erroneous initiation">
        <sequence resource="EMBL-CDS" id="AAC47471"/>
    </conflict>
    <text>Truncated N-terminus.</text>
</comment>
<comment type="sequence caution" evidence="3">
    <conflict type="erroneous initiation">
        <sequence resource="EMBL-CDS" id="AAC47474"/>
    </conflict>
    <text>Truncated N-terminus.</text>
</comment>
<keyword id="KW-0378">Hydrolase</keyword>
<keyword id="KW-0460">Magnesium</keyword>
<keyword id="KW-0479">Metal-binding</keyword>
<keyword id="KW-0546">Nucleotide metabolism</keyword>
<keyword id="KW-1185">Reference proteome</keyword>